<evidence type="ECO:0000250" key="1"/>
<evidence type="ECO:0000305" key="2"/>
<keyword id="KW-0428">Leader peptide</keyword>
<keyword id="KW-1185">Reference proteome</keyword>
<comment type="function">
    <text evidence="1">Makes mgtA transcription sensitive to intracellular proline levels. Under low levels of proline this protein cannot be fully translated, and a stem loop forms which permits transcription of the downstream mgtA gene (By similarity).</text>
</comment>
<comment type="similarity">
    <text evidence="2">Belongs to the MgtL family.</text>
</comment>
<sequence length="17" mass="2172">MDPEPTPLPRWRIFLFR</sequence>
<accession>P0CI68</accession>
<gene>
    <name type="primary">mgtL</name>
    <name type="ordered locus">STM4455.1</name>
</gene>
<protein>
    <recommendedName>
        <fullName>mgtA leader peptide</fullName>
    </recommendedName>
    <alternativeName>
        <fullName>Regulatory leader peptide for mgtA</fullName>
    </alternativeName>
</protein>
<reference key="1">
    <citation type="journal article" date="1995" name="J. Bacteriol.">
        <title>Magnesium transport in Salmonella typhimurium: mgtA encodes a P-type ATPase and is regulated by Mg2+ in a manner similar to that of the mgtB P-type ATPase.</title>
        <authorList>
            <person name="Tao T."/>
            <person name="Snavely M.D."/>
            <person name="Farr S.G."/>
            <person name="Maguire M.E."/>
        </authorList>
    </citation>
    <scope>NUCLEOTIDE SEQUENCE [GENOMIC DNA]</scope>
    <source>
        <strain>LT2</strain>
    </source>
</reference>
<reference key="2">
    <citation type="journal article" date="2001" name="Nature">
        <title>Complete genome sequence of Salmonella enterica serovar Typhimurium LT2.</title>
        <authorList>
            <person name="McClelland M."/>
            <person name="Sanderson K.E."/>
            <person name="Spieth J."/>
            <person name="Clifton S.W."/>
            <person name="Latreille P."/>
            <person name="Courtney L."/>
            <person name="Porwollik S."/>
            <person name="Ali J."/>
            <person name="Dante M."/>
            <person name="Du F."/>
            <person name="Hou S."/>
            <person name="Layman D."/>
            <person name="Leonard S."/>
            <person name="Nguyen C."/>
            <person name="Scott K."/>
            <person name="Holmes A."/>
            <person name="Grewal N."/>
            <person name="Mulvaney E."/>
            <person name="Ryan E."/>
            <person name="Sun H."/>
            <person name="Florea L."/>
            <person name="Miller W."/>
            <person name="Stoneking T."/>
            <person name="Nhan M."/>
            <person name="Waterston R."/>
            <person name="Wilson R.K."/>
        </authorList>
    </citation>
    <scope>NUCLEOTIDE SEQUENCE [LARGE SCALE GENOMIC DNA]</scope>
    <source>
        <strain>LT2 / SGSC1412 / ATCC 700720</strain>
    </source>
</reference>
<proteinExistence type="inferred from homology"/>
<organism>
    <name type="scientific">Salmonella typhimurium (strain LT2 / SGSC1412 / ATCC 700720)</name>
    <dbReference type="NCBI Taxonomy" id="99287"/>
    <lineage>
        <taxon>Bacteria</taxon>
        <taxon>Pseudomonadati</taxon>
        <taxon>Pseudomonadota</taxon>
        <taxon>Gammaproteobacteria</taxon>
        <taxon>Enterobacterales</taxon>
        <taxon>Enterobacteriaceae</taxon>
        <taxon>Salmonella</taxon>
    </lineage>
</organism>
<name>LPMG_SALTY</name>
<feature type="chain" id="PRO_0000403459" description="mgtA leader peptide">
    <location>
        <begin position="1"/>
        <end position="17"/>
    </location>
</feature>
<dbReference type="EMBL" id="U07843">
    <property type="status" value="NOT_ANNOTATED_CDS"/>
    <property type="molecule type" value="Genomic_DNA"/>
</dbReference>
<dbReference type="EMBL" id="AE006468">
    <property type="status" value="NOT_ANNOTATED_CDS"/>
    <property type="molecule type" value="Genomic_DNA"/>
</dbReference>
<dbReference type="Proteomes" id="UP000001014">
    <property type="component" value="Chromosome"/>
</dbReference>
<dbReference type="InterPro" id="IPR031434">
    <property type="entry name" value="MGTL"/>
</dbReference>
<dbReference type="Pfam" id="PF17059">
    <property type="entry name" value="MGTL"/>
    <property type="match status" value="1"/>
</dbReference>